<proteinExistence type="evidence at protein level"/>
<keyword id="KW-0007">Acetylation</keyword>
<keyword id="KW-0968">Cytoplasmic vesicle</keyword>
<keyword id="KW-0472">Membrane</keyword>
<keyword id="KW-1267">Proteomics identification</keyword>
<keyword id="KW-1185">Reference proteome</keyword>
<keyword id="KW-0770">Synapse</keyword>
<keyword id="KW-0812">Transmembrane</keyword>
<keyword id="KW-1133">Transmembrane helix</keyword>
<dbReference type="EMBL" id="AJ002309">
    <property type="protein sequence ID" value="CAA05326.2"/>
    <property type="molecule type" value="mRNA"/>
</dbReference>
<dbReference type="EMBL" id="AK313894">
    <property type="protein sequence ID" value="BAG36617.1"/>
    <property type="molecule type" value="mRNA"/>
</dbReference>
<dbReference type="EMBL" id="CH471112">
    <property type="protein sequence ID" value="EAW85577.1"/>
    <property type="molecule type" value="Genomic_DNA"/>
</dbReference>
<dbReference type="EMBL" id="BC014087">
    <property type="protein sequence ID" value="AAH14087.1"/>
    <property type="molecule type" value="mRNA"/>
</dbReference>
<dbReference type="CCDS" id="CCDS10456.1"/>
<dbReference type="RefSeq" id="NP_004200.2">
    <property type="nucleotide sequence ID" value="NM_004209.5"/>
</dbReference>
<dbReference type="SMR" id="O43761"/>
<dbReference type="BioGRID" id="114590">
    <property type="interactions" value="70"/>
</dbReference>
<dbReference type="FunCoup" id="O43761">
    <property type="interactions" value="521"/>
</dbReference>
<dbReference type="IntAct" id="O43761">
    <property type="interactions" value="30"/>
</dbReference>
<dbReference type="MINT" id="O43761"/>
<dbReference type="STRING" id="9606.ENSP00000248121"/>
<dbReference type="iPTMnet" id="O43761"/>
<dbReference type="PhosphoSitePlus" id="O43761"/>
<dbReference type="SwissPalm" id="O43761"/>
<dbReference type="BioMuta" id="SYNGR3"/>
<dbReference type="jPOST" id="O43761"/>
<dbReference type="MassIVE" id="O43761"/>
<dbReference type="PaxDb" id="9606-ENSP00000248121"/>
<dbReference type="PeptideAtlas" id="O43761"/>
<dbReference type="ProteomicsDB" id="49154"/>
<dbReference type="Pumba" id="O43761"/>
<dbReference type="Antibodypedia" id="23420">
    <property type="antibodies" value="109 antibodies from 26 providers"/>
</dbReference>
<dbReference type="DNASU" id="9143"/>
<dbReference type="Ensembl" id="ENST00000248121.7">
    <property type="protein sequence ID" value="ENSP00000248121.2"/>
    <property type="gene ID" value="ENSG00000127561.16"/>
</dbReference>
<dbReference type="Ensembl" id="ENST00000709282.1">
    <property type="protein sequence ID" value="ENSP00000517596.1"/>
    <property type="gene ID" value="ENSG00000291941.1"/>
</dbReference>
<dbReference type="GeneID" id="9143"/>
<dbReference type="KEGG" id="hsa:9143"/>
<dbReference type="MANE-Select" id="ENST00000248121.7">
    <property type="protein sequence ID" value="ENSP00000248121.2"/>
    <property type="RefSeq nucleotide sequence ID" value="NM_004209.6"/>
    <property type="RefSeq protein sequence ID" value="NP_004200.2"/>
</dbReference>
<dbReference type="UCSC" id="uc002cod.3">
    <property type="organism name" value="human"/>
</dbReference>
<dbReference type="AGR" id="HGNC:11501"/>
<dbReference type="CTD" id="9143"/>
<dbReference type="DisGeNET" id="9143"/>
<dbReference type="GeneCards" id="SYNGR3"/>
<dbReference type="HGNC" id="HGNC:11501">
    <property type="gene designation" value="SYNGR3"/>
</dbReference>
<dbReference type="HPA" id="ENSG00000127561">
    <property type="expression patterns" value="Tissue enriched (brain)"/>
</dbReference>
<dbReference type="MIM" id="603927">
    <property type="type" value="gene"/>
</dbReference>
<dbReference type="neXtProt" id="NX_O43761"/>
<dbReference type="OpenTargets" id="ENSG00000127561"/>
<dbReference type="PharmGKB" id="PA36283"/>
<dbReference type="VEuPathDB" id="HostDB:ENSG00000127561"/>
<dbReference type="eggNOG" id="KOG4016">
    <property type="taxonomic scope" value="Eukaryota"/>
</dbReference>
<dbReference type="GeneTree" id="ENSGT00950000182935"/>
<dbReference type="HOGENOM" id="CLU_079186_0_1_1"/>
<dbReference type="InParanoid" id="O43761"/>
<dbReference type="OMA" id="RVTTWIF"/>
<dbReference type="OrthoDB" id="10497833at2759"/>
<dbReference type="PAN-GO" id="O43761">
    <property type="GO annotations" value="2 GO annotations based on evolutionary models"/>
</dbReference>
<dbReference type="PhylomeDB" id="O43761"/>
<dbReference type="TreeFam" id="TF320995"/>
<dbReference type="PathwayCommons" id="O43761"/>
<dbReference type="SignaLink" id="O43761"/>
<dbReference type="BioGRID-ORCS" id="9143">
    <property type="hits" value="22 hits in 1150 CRISPR screens"/>
</dbReference>
<dbReference type="ChiTaRS" id="SYNGR3">
    <property type="organism name" value="human"/>
</dbReference>
<dbReference type="GenomeRNAi" id="9143"/>
<dbReference type="Pharos" id="O43761">
    <property type="development level" value="Tbio"/>
</dbReference>
<dbReference type="PRO" id="PR:O43761"/>
<dbReference type="Proteomes" id="UP000005640">
    <property type="component" value="Chromosome 16"/>
</dbReference>
<dbReference type="RNAct" id="O43761">
    <property type="molecule type" value="protein"/>
</dbReference>
<dbReference type="Bgee" id="ENSG00000127561">
    <property type="expression patterns" value="Expressed in middle temporal gyrus and 131 other cell types or tissues"/>
</dbReference>
<dbReference type="ExpressionAtlas" id="O43761">
    <property type="expression patterns" value="baseline and differential"/>
</dbReference>
<dbReference type="GO" id="GO:0016020">
    <property type="term" value="C:membrane"/>
    <property type="evidence" value="ECO:0000303"/>
    <property type="project" value="UniProtKB"/>
</dbReference>
<dbReference type="GO" id="GO:0031594">
    <property type="term" value="C:neuromuscular junction"/>
    <property type="evidence" value="ECO:0000318"/>
    <property type="project" value="GO_Central"/>
</dbReference>
<dbReference type="GO" id="GO:0008021">
    <property type="term" value="C:synaptic vesicle"/>
    <property type="evidence" value="ECO:0000250"/>
    <property type="project" value="UniProtKB"/>
</dbReference>
<dbReference type="GO" id="GO:0030672">
    <property type="term" value="C:synaptic vesicle membrane"/>
    <property type="evidence" value="ECO:0000318"/>
    <property type="project" value="GO_Central"/>
</dbReference>
<dbReference type="GO" id="GO:0042169">
    <property type="term" value="F:SH2 domain binding"/>
    <property type="evidence" value="ECO:0007669"/>
    <property type="project" value="Ensembl"/>
</dbReference>
<dbReference type="GO" id="GO:0032411">
    <property type="term" value="P:positive regulation of transporter activity"/>
    <property type="evidence" value="ECO:0000250"/>
    <property type="project" value="UniProtKB"/>
</dbReference>
<dbReference type="GO" id="GO:0045055">
    <property type="term" value="P:regulated exocytosis"/>
    <property type="evidence" value="ECO:0000250"/>
    <property type="project" value="UniProtKB"/>
</dbReference>
<dbReference type="GO" id="GO:0051580">
    <property type="term" value="P:regulation of neurotransmitter uptake"/>
    <property type="evidence" value="ECO:0007669"/>
    <property type="project" value="Ensembl"/>
</dbReference>
<dbReference type="GO" id="GO:0010807">
    <property type="term" value="P:regulation of synaptic vesicle priming"/>
    <property type="evidence" value="ECO:0007669"/>
    <property type="project" value="Ensembl"/>
</dbReference>
<dbReference type="GO" id="GO:0021762">
    <property type="term" value="P:substantia nigra development"/>
    <property type="evidence" value="ECO:0007007"/>
    <property type="project" value="UniProtKB"/>
</dbReference>
<dbReference type="InterPro" id="IPR008253">
    <property type="entry name" value="Marvel"/>
</dbReference>
<dbReference type="InterPro" id="IPR016579">
    <property type="entry name" value="Synaptogyrin"/>
</dbReference>
<dbReference type="PANTHER" id="PTHR10838">
    <property type="entry name" value="SYNAPTOGYRIN"/>
    <property type="match status" value="1"/>
</dbReference>
<dbReference type="PANTHER" id="PTHR10838:SF8">
    <property type="entry name" value="SYNAPTOGYRIN-3"/>
    <property type="match status" value="1"/>
</dbReference>
<dbReference type="Pfam" id="PF01284">
    <property type="entry name" value="MARVEL"/>
    <property type="match status" value="1"/>
</dbReference>
<dbReference type="PIRSF" id="PIRSF011282">
    <property type="entry name" value="Synaptogyrin"/>
    <property type="match status" value="1"/>
</dbReference>
<dbReference type="PROSITE" id="PS51225">
    <property type="entry name" value="MARVEL"/>
    <property type="match status" value="1"/>
</dbReference>
<accession>O43761</accession>
<accession>B2R9S0</accession>
<reference key="1">
    <citation type="journal article" date="1998" name="Hum. Genet.">
        <title>Characterization of the human synaptogyrin gene family.</title>
        <authorList>
            <person name="Kedra D."/>
            <person name="Pan H.-Q."/>
            <person name="Seroussi E."/>
            <person name="Fransson I."/>
            <person name="Guilbaud C."/>
            <person name="Collins J.E."/>
            <person name="Dunham I."/>
            <person name="Blennow E."/>
            <person name="Roe B.A."/>
            <person name="Piehl F."/>
            <person name="Dumanski J.P."/>
        </authorList>
    </citation>
    <scope>NUCLEOTIDE SEQUENCE [MRNA]</scope>
    <scope>TISSUE SPECIFICITY</scope>
</reference>
<reference key="2">
    <citation type="submission" date="1999-09" db="EMBL/GenBank/DDBJ databases">
        <authorList>
            <person name="Kedra D."/>
        </authorList>
    </citation>
    <scope>SEQUENCE REVISION</scope>
</reference>
<reference key="3">
    <citation type="journal article" date="2004" name="Nat. Genet.">
        <title>Complete sequencing and characterization of 21,243 full-length human cDNAs.</title>
        <authorList>
            <person name="Ota T."/>
            <person name="Suzuki Y."/>
            <person name="Nishikawa T."/>
            <person name="Otsuki T."/>
            <person name="Sugiyama T."/>
            <person name="Irie R."/>
            <person name="Wakamatsu A."/>
            <person name="Hayashi K."/>
            <person name="Sato H."/>
            <person name="Nagai K."/>
            <person name="Kimura K."/>
            <person name="Makita H."/>
            <person name="Sekine M."/>
            <person name="Obayashi M."/>
            <person name="Nishi T."/>
            <person name="Shibahara T."/>
            <person name="Tanaka T."/>
            <person name="Ishii S."/>
            <person name="Yamamoto J."/>
            <person name="Saito K."/>
            <person name="Kawai Y."/>
            <person name="Isono Y."/>
            <person name="Nakamura Y."/>
            <person name="Nagahari K."/>
            <person name="Murakami K."/>
            <person name="Yasuda T."/>
            <person name="Iwayanagi T."/>
            <person name="Wagatsuma M."/>
            <person name="Shiratori A."/>
            <person name="Sudo H."/>
            <person name="Hosoiri T."/>
            <person name="Kaku Y."/>
            <person name="Kodaira H."/>
            <person name="Kondo H."/>
            <person name="Sugawara M."/>
            <person name="Takahashi M."/>
            <person name="Kanda K."/>
            <person name="Yokoi T."/>
            <person name="Furuya T."/>
            <person name="Kikkawa E."/>
            <person name="Omura Y."/>
            <person name="Abe K."/>
            <person name="Kamihara K."/>
            <person name="Katsuta N."/>
            <person name="Sato K."/>
            <person name="Tanikawa M."/>
            <person name="Yamazaki M."/>
            <person name="Ninomiya K."/>
            <person name="Ishibashi T."/>
            <person name="Yamashita H."/>
            <person name="Murakawa K."/>
            <person name="Fujimori K."/>
            <person name="Tanai H."/>
            <person name="Kimata M."/>
            <person name="Watanabe M."/>
            <person name="Hiraoka S."/>
            <person name="Chiba Y."/>
            <person name="Ishida S."/>
            <person name="Ono Y."/>
            <person name="Takiguchi S."/>
            <person name="Watanabe S."/>
            <person name="Yosida M."/>
            <person name="Hotuta T."/>
            <person name="Kusano J."/>
            <person name="Kanehori K."/>
            <person name="Takahashi-Fujii A."/>
            <person name="Hara H."/>
            <person name="Tanase T.-O."/>
            <person name="Nomura Y."/>
            <person name="Togiya S."/>
            <person name="Komai F."/>
            <person name="Hara R."/>
            <person name="Takeuchi K."/>
            <person name="Arita M."/>
            <person name="Imose N."/>
            <person name="Musashino K."/>
            <person name="Yuuki H."/>
            <person name="Oshima A."/>
            <person name="Sasaki N."/>
            <person name="Aotsuka S."/>
            <person name="Yoshikawa Y."/>
            <person name="Matsunawa H."/>
            <person name="Ichihara T."/>
            <person name="Shiohata N."/>
            <person name="Sano S."/>
            <person name="Moriya S."/>
            <person name="Momiyama H."/>
            <person name="Satoh N."/>
            <person name="Takami S."/>
            <person name="Terashima Y."/>
            <person name="Suzuki O."/>
            <person name="Nakagawa S."/>
            <person name="Senoh A."/>
            <person name="Mizoguchi H."/>
            <person name="Goto Y."/>
            <person name="Shimizu F."/>
            <person name="Wakebe H."/>
            <person name="Hishigaki H."/>
            <person name="Watanabe T."/>
            <person name="Sugiyama A."/>
            <person name="Takemoto M."/>
            <person name="Kawakami B."/>
            <person name="Yamazaki M."/>
            <person name="Watanabe K."/>
            <person name="Kumagai A."/>
            <person name="Itakura S."/>
            <person name="Fukuzumi Y."/>
            <person name="Fujimori Y."/>
            <person name="Komiyama M."/>
            <person name="Tashiro H."/>
            <person name="Tanigami A."/>
            <person name="Fujiwara T."/>
            <person name="Ono T."/>
            <person name="Yamada K."/>
            <person name="Fujii Y."/>
            <person name="Ozaki K."/>
            <person name="Hirao M."/>
            <person name="Ohmori Y."/>
            <person name="Kawabata A."/>
            <person name="Hikiji T."/>
            <person name="Kobatake N."/>
            <person name="Inagaki H."/>
            <person name="Ikema Y."/>
            <person name="Okamoto S."/>
            <person name="Okitani R."/>
            <person name="Kawakami T."/>
            <person name="Noguchi S."/>
            <person name="Itoh T."/>
            <person name="Shigeta K."/>
            <person name="Senba T."/>
            <person name="Matsumura K."/>
            <person name="Nakajima Y."/>
            <person name="Mizuno T."/>
            <person name="Morinaga M."/>
            <person name="Sasaki M."/>
            <person name="Togashi T."/>
            <person name="Oyama M."/>
            <person name="Hata H."/>
            <person name="Watanabe M."/>
            <person name="Komatsu T."/>
            <person name="Mizushima-Sugano J."/>
            <person name="Satoh T."/>
            <person name="Shirai Y."/>
            <person name="Takahashi Y."/>
            <person name="Nakagawa K."/>
            <person name="Okumura K."/>
            <person name="Nagase T."/>
            <person name="Nomura N."/>
            <person name="Kikuchi H."/>
            <person name="Masuho Y."/>
            <person name="Yamashita R."/>
            <person name="Nakai K."/>
            <person name="Yada T."/>
            <person name="Nakamura Y."/>
            <person name="Ohara O."/>
            <person name="Isogai T."/>
            <person name="Sugano S."/>
        </authorList>
    </citation>
    <scope>NUCLEOTIDE SEQUENCE [LARGE SCALE MRNA]</scope>
    <source>
        <tissue>Brain cortex</tissue>
    </source>
</reference>
<reference key="4">
    <citation type="submission" date="2005-09" db="EMBL/GenBank/DDBJ databases">
        <authorList>
            <person name="Mural R.J."/>
            <person name="Istrail S."/>
            <person name="Sutton G.G."/>
            <person name="Florea L."/>
            <person name="Halpern A.L."/>
            <person name="Mobarry C.M."/>
            <person name="Lippert R."/>
            <person name="Walenz B."/>
            <person name="Shatkay H."/>
            <person name="Dew I."/>
            <person name="Miller J.R."/>
            <person name="Flanigan M.J."/>
            <person name="Edwards N.J."/>
            <person name="Bolanos R."/>
            <person name="Fasulo D."/>
            <person name="Halldorsson B.V."/>
            <person name="Hannenhalli S."/>
            <person name="Turner R."/>
            <person name="Yooseph S."/>
            <person name="Lu F."/>
            <person name="Nusskern D.R."/>
            <person name="Shue B.C."/>
            <person name="Zheng X.H."/>
            <person name="Zhong F."/>
            <person name="Delcher A.L."/>
            <person name="Huson D.H."/>
            <person name="Kravitz S.A."/>
            <person name="Mouchard L."/>
            <person name="Reinert K."/>
            <person name="Remington K.A."/>
            <person name="Clark A.G."/>
            <person name="Waterman M.S."/>
            <person name="Eichler E.E."/>
            <person name="Adams M.D."/>
            <person name="Hunkapiller M.W."/>
            <person name="Myers E.W."/>
            <person name="Venter J.C."/>
        </authorList>
    </citation>
    <scope>NUCLEOTIDE SEQUENCE [LARGE SCALE GENOMIC DNA]</scope>
</reference>
<reference key="5">
    <citation type="journal article" date="2004" name="Genome Res.">
        <title>The status, quality, and expansion of the NIH full-length cDNA project: the Mammalian Gene Collection (MGC).</title>
        <authorList>
            <consortium name="The MGC Project Team"/>
        </authorList>
    </citation>
    <scope>NUCLEOTIDE SEQUENCE [LARGE SCALE MRNA]</scope>
    <source>
        <tissue>B-cell</tissue>
    </source>
</reference>
<reference key="6">
    <citation type="journal article" date="2012" name="Mol. Cell. Proteomics">
        <title>Comparative large-scale characterisation of plant vs. mammal proteins reveals similar and idiosyncratic N-alpha acetylation features.</title>
        <authorList>
            <person name="Bienvenut W.V."/>
            <person name="Sumpton D."/>
            <person name="Martinez A."/>
            <person name="Lilla S."/>
            <person name="Espagne C."/>
            <person name="Meinnel T."/>
            <person name="Giglione C."/>
        </authorList>
    </citation>
    <scope>ACETYLATION [LARGE SCALE ANALYSIS] AT MET-1</scope>
    <scope>IDENTIFICATION BY MASS SPECTROMETRY [LARGE SCALE ANALYSIS]</scope>
</reference>
<reference key="7">
    <citation type="journal article" date="2012" name="Proc. Natl. Acad. Sci. U.S.A.">
        <title>N-terminal acetylome analyses and functional insights of the N-terminal acetyltransferase NatB.</title>
        <authorList>
            <person name="Van Damme P."/>
            <person name="Lasa M."/>
            <person name="Polevoda B."/>
            <person name="Gazquez C."/>
            <person name="Elosegui-Artola A."/>
            <person name="Kim D.S."/>
            <person name="De Juan-Pardo E."/>
            <person name="Demeyer K."/>
            <person name="Hole K."/>
            <person name="Larrea E."/>
            <person name="Timmerman E."/>
            <person name="Prieto J."/>
            <person name="Arnesen T."/>
            <person name="Sherman F."/>
            <person name="Gevaert K."/>
            <person name="Aldabe R."/>
        </authorList>
    </citation>
    <scope>ACETYLATION [LARGE SCALE ANALYSIS] AT MET-1</scope>
    <scope>IDENTIFICATION BY MASS SPECTROMETRY [LARGE SCALE ANALYSIS]</scope>
</reference>
<organism>
    <name type="scientific">Homo sapiens</name>
    <name type="common">Human</name>
    <dbReference type="NCBI Taxonomy" id="9606"/>
    <lineage>
        <taxon>Eukaryota</taxon>
        <taxon>Metazoa</taxon>
        <taxon>Chordata</taxon>
        <taxon>Craniata</taxon>
        <taxon>Vertebrata</taxon>
        <taxon>Euteleostomi</taxon>
        <taxon>Mammalia</taxon>
        <taxon>Eutheria</taxon>
        <taxon>Euarchontoglires</taxon>
        <taxon>Primates</taxon>
        <taxon>Haplorrhini</taxon>
        <taxon>Catarrhini</taxon>
        <taxon>Hominidae</taxon>
        <taxon>Homo</taxon>
    </lineage>
</organism>
<evidence type="ECO:0000250" key="1">
    <source>
        <dbReference type="UniProtKB" id="Q8R191"/>
    </source>
</evidence>
<evidence type="ECO:0000255" key="2"/>
<evidence type="ECO:0000255" key="3">
    <source>
        <dbReference type="PROSITE-ProRule" id="PRU00581"/>
    </source>
</evidence>
<evidence type="ECO:0000256" key="4">
    <source>
        <dbReference type="SAM" id="MobiDB-lite"/>
    </source>
</evidence>
<evidence type="ECO:0000269" key="5">
    <source>
    </source>
</evidence>
<evidence type="ECO:0000305" key="6"/>
<evidence type="ECO:0000312" key="7">
    <source>
        <dbReference type="HGNC" id="HGNC:11501"/>
    </source>
</evidence>
<evidence type="ECO:0007744" key="8">
    <source>
    </source>
</evidence>
<evidence type="ECO:0007744" key="9">
    <source>
    </source>
</evidence>
<name>SNG3_HUMAN</name>
<comment type="function">
    <text evidence="1">May play a role in regulated exocytosis. May indirectly regulate the activity of the plasma membrane dopamine transporter SLC6A3 and thereby regulate dopamine transport back from the synaptic cleft into the presynaptic terminal.</text>
</comment>
<comment type="subunit">
    <text evidence="1">Interacts (via N-terminus) with SLC6A3 (via N-terminus). May interact with VMAT2.</text>
</comment>
<comment type="interaction">
    <interactant intactId="EBI-11321949">
        <id>O43761</id>
    </interactant>
    <interactant intactId="EBI-2876502">
        <id>Q96CM8</id>
        <label>ACSF2</label>
    </interactant>
    <organismsDiffer>false</organismsDiffer>
    <experiments>3</experiments>
</comment>
<comment type="interaction">
    <interactant intactId="EBI-11321949">
        <id>O43761</id>
    </interactant>
    <interactant intactId="EBI-2808808">
        <id>P53367</id>
        <label>ARFIP1</label>
    </interactant>
    <organismsDiffer>false</organismsDiffer>
    <experiments>3</experiments>
</comment>
<comment type="interaction">
    <interactant intactId="EBI-11321949">
        <id>O43761</id>
    </interactant>
    <interactant intactId="EBI-2339219">
        <id>Q08426</id>
        <label>EHHADH</label>
    </interactant>
    <organismsDiffer>false</organismsDiffer>
    <experiments>3</experiments>
</comment>
<comment type="interaction">
    <interactant intactId="EBI-11321949">
        <id>O43761</id>
    </interactant>
    <interactant intactId="EBI-9304251">
        <id>Q05329</id>
        <label>GAD2</label>
    </interactant>
    <organismsDiffer>false</organismsDiffer>
    <experiments>3</experiments>
</comment>
<comment type="interaction">
    <interactant intactId="EBI-11321949">
        <id>O43761</id>
    </interactant>
    <interactant intactId="EBI-2685549">
        <id>C9JCN9</id>
        <label>HSBP1L1</label>
    </interactant>
    <organismsDiffer>false</organismsDiffer>
    <experiments>3</experiments>
</comment>
<comment type="interaction">
    <interactant intactId="EBI-11321949">
        <id>O43761</id>
    </interactant>
    <interactant intactId="EBI-399080">
        <id>Q92993</id>
        <label>KAT5</label>
    </interactant>
    <organismsDiffer>false</organismsDiffer>
    <experiments>3</experiments>
</comment>
<comment type="interaction">
    <interactant intactId="EBI-11321949">
        <id>O43761</id>
    </interactant>
    <interactant intactId="EBI-11742507">
        <id>Q8TAP4-4</id>
        <label>LMO3</label>
    </interactant>
    <organismsDiffer>false</organismsDiffer>
    <experiments>3</experiments>
</comment>
<comment type="interaction">
    <interactant intactId="EBI-11321949">
        <id>O43761</id>
    </interactant>
    <interactant intactId="EBI-7153979">
        <id>Q504T8</id>
        <label>MIDN</label>
    </interactant>
    <organismsDiffer>false</organismsDiffer>
    <experiments>3</experiments>
</comment>
<comment type="interaction">
    <interactant intactId="EBI-11321949">
        <id>O43761</id>
    </interactant>
    <interactant intactId="EBI-711788">
        <id>Q00013</id>
        <label>MPP1</label>
    </interactant>
    <organismsDiffer>false</organismsDiffer>
    <experiments>3</experiments>
</comment>
<comment type="interaction">
    <interactant intactId="EBI-11321949">
        <id>O43761</id>
    </interactant>
    <interactant intactId="EBI-11978907">
        <id>Q9ULP0-2</id>
        <label>NDRG4</label>
    </interactant>
    <organismsDiffer>false</organismsDiffer>
    <experiments>3</experiments>
</comment>
<comment type="interaction">
    <interactant intactId="EBI-11321949">
        <id>O43761</id>
    </interactant>
    <interactant intactId="EBI-725795">
        <id>O60664</id>
        <label>PLIN3</label>
    </interactant>
    <organismsDiffer>false</organismsDiffer>
    <experiments>3</experiments>
</comment>
<comment type="interaction">
    <interactant intactId="EBI-11321949">
        <id>O43761</id>
    </interactant>
    <interactant intactId="EBI-1045072">
        <id>Q96T60</id>
        <label>PNKP</label>
    </interactant>
    <organismsDiffer>false</organismsDiffer>
    <experiments>3</experiments>
</comment>
<comment type="interaction">
    <interactant intactId="EBI-11321949">
        <id>O43761</id>
    </interactant>
    <interactant intactId="EBI-1383528">
        <id>P17252</id>
        <label>PRKCA</label>
    </interactant>
    <organismsDiffer>false</organismsDiffer>
    <experiments>3</experiments>
</comment>
<comment type="interaction">
    <interactant intactId="EBI-11321949">
        <id>O43761</id>
    </interactant>
    <interactant intactId="EBI-9090795">
        <id>Q15047-2</id>
        <label>SETDB1</label>
    </interactant>
    <organismsDiffer>false</organismsDiffer>
    <experiments>3</experiments>
</comment>
<comment type="interaction">
    <interactant intactId="EBI-11321949">
        <id>O43761</id>
    </interactant>
    <interactant intactId="EBI-2623095">
        <id>Q9Y371</id>
        <label>SH3GLB1</label>
    </interactant>
    <organismsDiffer>false</organismsDiffer>
    <experiments>6</experiments>
</comment>
<comment type="interaction">
    <interactant intactId="EBI-11321949">
        <id>O43761</id>
    </interactant>
    <interactant intactId="EBI-742688">
        <id>Q9NZD8</id>
        <label>SPG21</label>
    </interactant>
    <organismsDiffer>false</organismsDiffer>
    <experiments>5</experiments>
</comment>
<comment type="interaction">
    <interactant intactId="EBI-11321949">
        <id>O43761</id>
    </interactant>
    <interactant intactId="EBI-10210710">
        <id>P49638</id>
        <label>TTPA</label>
    </interactant>
    <organismsDiffer>false</organismsDiffer>
    <experiments>3</experiments>
</comment>
<comment type="interaction">
    <interactant intactId="EBI-11321949">
        <id>O43761</id>
    </interactant>
    <interactant intactId="EBI-359832">
        <id>P61981</id>
        <label>YWHAG</label>
    </interactant>
    <organismsDiffer>false</organismsDiffer>
    <experiments>3</experiments>
</comment>
<comment type="subcellular location">
    <subcellularLocation>
        <location evidence="1">Cytoplasmic vesicle</location>
        <location evidence="1">Secretory vesicle</location>
        <location evidence="1">Synaptic vesicle membrane</location>
        <topology evidence="2">Multi-pass membrane protein</topology>
    </subcellularLocation>
    <subcellularLocation>
        <location evidence="1">Synapse</location>
    </subcellularLocation>
    <text evidence="1">Found at the neuromuscular synapses.</text>
</comment>
<comment type="tissue specificity">
    <text evidence="5">Expressed in brain and placenta.</text>
</comment>
<comment type="similarity">
    <text evidence="6">Belongs to the synaptogyrin family.</text>
</comment>
<feature type="chain" id="PRO_0000183996" description="Synaptogyrin-3">
    <location>
        <begin position="1"/>
        <end position="229"/>
    </location>
</feature>
<feature type="transmembrane region" description="Helical" evidence="2">
    <location>
        <begin position="30"/>
        <end position="50"/>
    </location>
</feature>
<feature type="transmembrane region" description="Helical" evidence="2">
    <location>
        <begin position="70"/>
        <end position="90"/>
    </location>
</feature>
<feature type="transmembrane region" description="Helical" evidence="2">
    <location>
        <begin position="105"/>
        <end position="125"/>
    </location>
</feature>
<feature type="transmembrane region" description="Helical" evidence="2">
    <location>
        <begin position="148"/>
        <end position="168"/>
    </location>
</feature>
<feature type="domain" description="MARVEL" evidence="3">
    <location>
        <begin position="20"/>
        <end position="172"/>
    </location>
</feature>
<feature type="region of interest" description="Disordered" evidence="4">
    <location>
        <begin position="209"/>
        <end position="229"/>
    </location>
</feature>
<feature type="compositionally biased region" description="Polar residues" evidence="4">
    <location>
        <begin position="209"/>
        <end position="219"/>
    </location>
</feature>
<feature type="modified residue" description="N-acetylmethionine" evidence="8 9">
    <location>
        <position position="1"/>
    </location>
</feature>
<gene>
    <name evidence="7" type="primary">SYNGR3</name>
</gene>
<sequence length="229" mass="24555">MEGASFGAGRAGAALDPVSFARRPQTLLRVASWVFSIAVFGPIVNEGYVNTDSGPELRCVFNGNAGACRFGVALGLGAFLACAAFLLLDVRFQQISSVRDRRRAVLLDLGFSGLWSFLWFVGFCFLTNQWQRTAPGPATTQAGDAARAAIAFSFFSILSWVALTVKALQRFRLGTDMSLFATEQLSTGASQAYPGYPVGSGVEGTETYQSPPFTETLDTSPKGYQVPAY</sequence>
<protein>
    <recommendedName>
        <fullName evidence="6">Synaptogyrin-3</fullName>
    </recommendedName>
</protein>